<proteinExistence type="inferred from homology"/>
<reference key="1">
    <citation type="submission" date="2007-04" db="EMBL/GenBank/DDBJ databases">
        <title>Complete sequence of Shewanella putrefaciens CN-32.</title>
        <authorList>
            <consortium name="US DOE Joint Genome Institute"/>
            <person name="Copeland A."/>
            <person name="Lucas S."/>
            <person name="Lapidus A."/>
            <person name="Barry K."/>
            <person name="Detter J.C."/>
            <person name="Glavina del Rio T."/>
            <person name="Hammon N."/>
            <person name="Israni S."/>
            <person name="Dalin E."/>
            <person name="Tice H."/>
            <person name="Pitluck S."/>
            <person name="Chain P."/>
            <person name="Malfatti S."/>
            <person name="Shin M."/>
            <person name="Vergez L."/>
            <person name="Schmutz J."/>
            <person name="Larimer F."/>
            <person name="Land M."/>
            <person name="Hauser L."/>
            <person name="Kyrpides N."/>
            <person name="Mikhailova N."/>
            <person name="Romine M.F."/>
            <person name="Fredrickson J."/>
            <person name="Tiedje J."/>
            <person name="Richardson P."/>
        </authorList>
    </citation>
    <scope>NUCLEOTIDE SEQUENCE [LARGE SCALE GENOMIC DNA]</scope>
    <source>
        <strain>CN-32 / ATCC BAA-453</strain>
    </source>
</reference>
<keyword id="KW-0012">Acyltransferase</keyword>
<keyword id="KW-0028">Amino-acid biosynthesis</keyword>
<keyword id="KW-0963">Cytoplasm</keyword>
<keyword id="KW-0486">Methionine biosynthesis</keyword>
<keyword id="KW-0808">Transferase</keyword>
<name>METAS_SHEPC</name>
<evidence type="ECO:0000255" key="1">
    <source>
        <dbReference type="HAMAP-Rule" id="MF_00295"/>
    </source>
</evidence>
<accession>A4Y589</accession>
<gene>
    <name evidence="1" type="primary">metAS</name>
    <name type="ordered locus">Sputcn32_1395</name>
</gene>
<feature type="chain" id="PRO_1000021838" description="Homoserine O-succinyltransferase">
    <location>
        <begin position="1"/>
        <end position="318"/>
    </location>
</feature>
<feature type="active site" description="Acyl-thioester intermediate" evidence="1">
    <location>
        <position position="142"/>
    </location>
</feature>
<feature type="active site" description="Proton acceptor" evidence="1">
    <location>
        <position position="235"/>
    </location>
</feature>
<feature type="active site" evidence="1">
    <location>
        <position position="237"/>
    </location>
</feature>
<feature type="binding site" evidence="1">
    <location>
        <position position="163"/>
    </location>
    <ligand>
        <name>substrate</name>
    </ligand>
</feature>
<feature type="binding site" evidence="1">
    <location>
        <position position="192"/>
    </location>
    <ligand>
        <name>substrate</name>
    </ligand>
</feature>
<feature type="binding site" evidence="1">
    <location>
        <position position="249"/>
    </location>
    <ligand>
        <name>substrate</name>
    </ligand>
</feature>
<feature type="site" description="Important for acyl-CoA specificity" evidence="1">
    <location>
        <position position="111"/>
    </location>
</feature>
<feature type="site" description="Important for substrate specificity" evidence="1">
    <location>
        <position position="192"/>
    </location>
</feature>
<sequence>MPVRIPDHLPAAGVLESENIFVMSETRAANQDIRPMKVLILNLMPNKIETETQLLRLLGNTPLQVDVDLLRIHDKESKHTSIDHMNTFYRDFEDVRHKNYDGLIITGAPLGQIDFEDVVYWDHIREIIDWSQEHVTSVLFLCWAAHAGLYHLYGLNRKILQQKRSGVFVHRRTCQHFPLLRGFDDEFFAPHSRFAEMDVEDIRQHPQLQVLAQSDEAGAYLVLSRNNRNLFVMGHPEYQKSTLNDEYHRDLAQGLNPNVPQNYYRNNDPEAEAIARWHSHGSLLVSNWLNYYVYQLTPYDLSDMTAMTPWESRQETLP</sequence>
<comment type="function">
    <text evidence="1">Transfers a succinyl group from succinyl-CoA to L-homoserine, forming succinyl-L-homoserine.</text>
</comment>
<comment type="catalytic activity">
    <reaction evidence="1">
        <text>L-homoserine + succinyl-CoA = O-succinyl-L-homoserine + CoA</text>
        <dbReference type="Rhea" id="RHEA:22008"/>
        <dbReference type="ChEBI" id="CHEBI:57287"/>
        <dbReference type="ChEBI" id="CHEBI:57292"/>
        <dbReference type="ChEBI" id="CHEBI:57476"/>
        <dbReference type="ChEBI" id="CHEBI:57661"/>
        <dbReference type="EC" id="2.3.1.46"/>
    </reaction>
</comment>
<comment type="pathway">
    <text evidence="1">Amino-acid biosynthesis; L-methionine biosynthesis via de novo pathway; O-succinyl-L-homoserine from L-homoserine: step 1/1.</text>
</comment>
<comment type="subcellular location">
    <subcellularLocation>
        <location evidence="1">Cytoplasm</location>
    </subcellularLocation>
</comment>
<comment type="similarity">
    <text evidence="1">Belongs to the MetA family.</text>
</comment>
<dbReference type="EC" id="2.3.1.46" evidence="1"/>
<dbReference type="EMBL" id="CP000681">
    <property type="protein sequence ID" value="ABP75122.1"/>
    <property type="molecule type" value="Genomic_DNA"/>
</dbReference>
<dbReference type="SMR" id="A4Y589"/>
<dbReference type="STRING" id="319224.Sputcn32_1395"/>
<dbReference type="KEGG" id="spc:Sputcn32_1395"/>
<dbReference type="eggNOG" id="COG1897">
    <property type="taxonomic scope" value="Bacteria"/>
</dbReference>
<dbReference type="HOGENOM" id="CLU_057851_0_1_6"/>
<dbReference type="UniPathway" id="UPA00051">
    <property type="reaction ID" value="UER00075"/>
</dbReference>
<dbReference type="GO" id="GO:0005737">
    <property type="term" value="C:cytoplasm"/>
    <property type="evidence" value="ECO:0007669"/>
    <property type="project" value="UniProtKB-SubCell"/>
</dbReference>
<dbReference type="GO" id="GO:0004414">
    <property type="term" value="F:homoserine O-acetyltransferase activity"/>
    <property type="evidence" value="ECO:0007669"/>
    <property type="project" value="UniProtKB-UniRule"/>
</dbReference>
<dbReference type="GO" id="GO:0008899">
    <property type="term" value="F:homoserine O-succinyltransferase activity"/>
    <property type="evidence" value="ECO:0007669"/>
    <property type="project" value="UniProtKB-EC"/>
</dbReference>
<dbReference type="GO" id="GO:0019281">
    <property type="term" value="P:L-methionine biosynthetic process from homoserine via O-succinyl-L-homoserine and cystathionine"/>
    <property type="evidence" value="ECO:0007669"/>
    <property type="project" value="InterPro"/>
</dbReference>
<dbReference type="CDD" id="cd03131">
    <property type="entry name" value="GATase1_HTS"/>
    <property type="match status" value="1"/>
</dbReference>
<dbReference type="FunFam" id="3.40.50.880:FF:000004">
    <property type="entry name" value="Homoserine O-succinyltransferase"/>
    <property type="match status" value="1"/>
</dbReference>
<dbReference type="Gene3D" id="3.40.50.880">
    <property type="match status" value="1"/>
</dbReference>
<dbReference type="HAMAP" id="MF_00295">
    <property type="entry name" value="MetA_acyltransf"/>
    <property type="match status" value="1"/>
</dbReference>
<dbReference type="InterPro" id="IPR029062">
    <property type="entry name" value="Class_I_gatase-like"/>
</dbReference>
<dbReference type="InterPro" id="IPR005697">
    <property type="entry name" value="HST_MetA"/>
</dbReference>
<dbReference type="InterPro" id="IPR033752">
    <property type="entry name" value="MetA_family"/>
</dbReference>
<dbReference type="NCBIfam" id="TIGR01001">
    <property type="entry name" value="metA"/>
    <property type="match status" value="1"/>
</dbReference>
<dbReference type="PANTHER" id="PTHR20919">
    <property type="entry name" value="HOMOSERINE O-SUCCINYLTRANSFERASE"/>
    <property type="match status" value="1"/>
</dbReference>
<dbReference type="PANTHER" id="PTHR20919:SF0">
    <property type="entry name" value="HOMOSERINE O-SUCCINYLTRANSFERASE"/>
    <property type="match status" value="1"/>
</dbReference>
<dbReference type="Pfam" id="PF04204">
    <property type="entry name" value="HTS"/>
    <property type="match status" value="1"/>
</dbReference>
<dbReference type="PIRSF" id="PIRSF000450">
    <property type="entry name" value="H_ser_succinyltr"/>
    <property type="match status" value="1"/>
</dbReference>
<dbReference type="SUPFAM" id="SSF52317">
    <property type="entry name" value="Class I glutamine amidotransferase-like"/>
    <property type="match status" value="1"/>
</dbReference>
<protein>
    <recommendedName>
        <fullName evidence="1">Homoserine O-succinyltransferase</fullName>
        <shortName evidence="1">HST</shortName>
        <ecNumber evidence="1">2.3.1.46</ecNumber>
    </recommendedName>
    <alternativeName>
        <fullName evidence="1">Homoserine transsuccinylase</fullName>
        <shortName evidence="1">HTS</shortName>
    </alternativeName>
</protein>
<organism>
    <name type="scientific">Shewanella putrefaciens (strain CN-32 / ATCC BAA-453)</name>
    <dbReference type="NCBI Taxonomy" id="319224"/>
    <lineage>
        <taxon>Bacteria</taxon>
        <taxon>Pseudomonadati</taxon>
        <taxon>Pseudomonadota</taxon>
        <taxon>Gammaproteobacteria</taxon>
        <taxon>Alteromonadales</taxon>
        <taxon>Shewanellaceae</taxon>
        <taxon>Shewanella</taxon>
    </lineage>
</organism>